<keyword id="KW-0007">Acetylation</keyword>
<keyword id="KW-0025">Alternative splicing</keyword>
<keyword id="KW-1003">Cell membrane</keyword>
<keyword id="KW-0966">Cell projection</keyword>
<keyword id="KW-0133">Cell shape</keyword>
<keyword id="KW-0175">Coiled coil</keyword>
<keyword id="KW-0449">Lipoprotein</keyword>
<keyword id="KW-0472">Membrane</keyword>
<keyword id="KW-0488">Methylation</keyword>
<keyword id="KW-0564">Palmitate</keyword>
<keyword id="KW-0597">Phosphoprotein</keyword>
<keyword id="KW-0636">Prenylation</keyword>
<keyword id="KW-1267">Proteomics identification</keyword>
<keyword id="KW-1185">Reference proteome</keyword>
<keyword id="KW-0770">Synapse</keyword>
<evidence type="ECO:0000250" key="1"/>
<evidence type="ECO:0000250" key="2">
    <source>
        <dbReference type="UniProtKB" id="Q920Q0"/>
    </source>
</evidence>
<evidence type="ECO:0000250" key="3">
    <source>
        <dbReference type="UniProtKB" id="Q9Z0P4"/>
    </source>
</evidence>
<evidence type="ECO:0000255" key="4"/>
<evidence type="ECO:0000256" key="5">
    <source>
        <dbReference type="SAM" id="MobiDB-lite"/>
    </source>
</evidence>
<evidence type="ECO:0000269" key="6">
    <source>
    </source>
</evidence>
<evidence type="ECO:0000269" key="7">
    <source>
    </source>
</evidence>
<evidence type="ECO:0000269" key="8">
    <source>
    </source>
</evidence>
<evidence type="ECO:0000303" key="9">
    <source>
    </source>
</evidence>
<evidence type="ECO:0000303" key="10">
    <source>
    </source>
</evidence>
<evidence type="ECO:0000305" key="11"/>
<evidence type="ECO:0007744" key="12">
    <source>
    </source>
</evidence>
<evidence type="ECO:0007744" key="13">
    <source>
    </source>
</evidence>
<evidence type="ECO:0007744" key="14">
    <source>
    </source>
</evidence>
<evidence type="ECO:0007744" key="15">
    <source>
    </source>
</evidence>
<evidence type="ECO:0007744" key="16">
    <source>
    </source>
</evidence>
<organism>
    <name type="scientific">Homo sapiens</name>
    <name type="common">Human</name>
    <dbReference type="NCBI Taxonomy" id="9606"/>
    <lineage>
        <taxon>Eukaryota</taxon>
        <taxon>Metazoa</taxon>
        <taxon>Chordata</taxon>
        <taxon>Craniata</taxon>
        <taxon>Vertebrata</taxon>
        <taxon>Euteleostomi</taxon>
        <taxon>Mammalia</taxon>
        <taxon>Eutheria</taxon>
        <taxon>Euarchontoglires</taxon>
        <taxon>Primates</taxon>
        <taxon>Haplorrhini</taxon>
        <taxon>Catarrhini</taxon>
        <taxon>Hominidae</taxon>
        <taxon>Homo</taxon>
    </lineage>
</organism>
<accession>O75781</accession>
<accession>O43359</accession>
<accession>O95673</accession>
<accession>Q92559</accession>
<accession>Q9UPJ4</accession>
<accession>Q9UQS2</accession>
<accession>Q9UQS3</accession>
<gene>
    <name type="primary">PALM</name>
    <name type="synonym">KIAA0270</name>
</gene>
<name>PALM_HUMAN</name>
<sequence length="387" mass="42076">MEVLAAETTSQQERLQAIAEKRKRQAEIENKRRQLEDERRQLQHLKSKALRERWLLEGTPSSASEGDEDLRRQMQDDEQKTRLLEDSVSRLEKEIEVLERGDSAPATAKENAAAPSPVRAPAPSPAKEERKTEVVMNSQQTPVGTPKDKRVSNTPLRTVDGSPMMKAAMYSVEITVEKDKVTGETRVLSSTTLLPRQPLPLGIKVYEDETKVVHAVDGTAENGIHPLSSSEVDELIHKADEVTLSEAGSTAGAAETRGAVEGAARTTPSRREITGVQAQPGEATSGPPGIQPGQEPPVTMIFMGYQNVEDEAETKKVLGLQDTITAELVVIEDAAEPKEPAPPNGSAAEPPTEAASREENQAGPEATTSDPQDLDMKKHRCKCCSIM</sequence>
<comment type="function">
    <text evidence="6">Involved in plasma membrane dynamics and cell process formation. Isoform 1 and isoform 2 are necessary for axonal and dendritic filopodia induction, for dendritic spine maturation and synapse formation in a palmitoylation-dependent manner.</text>
</comment>
<comment type="subunit">
    <text evidence="7">Interacts with dopamine receptor DRD3.</text>
</comment>
<comment type="interaction">
    <interactant intactId="EBI-6448827">
        <id>O75781</id>
    </interactant>
    <interactant intactId="EBI-10976677">
        <id>G5E9A7</id>
        <label>DMWD</label>
    </interactant>
    <organismsDiffer>false</organismsDiffer>
    <experiments>3</experiments>
</comment>
<comment type="interaction">
    <interactant intactId="EBI-6448827">
        <id>O75781</id>
    </interactant>
    <interactant intactId="EBI-5235340">
        <id>Q7Z699</id>
        <label>SPRED1</label>
    </interactant>
    <organismsDiffer>false</organismsDiffer>
    <experiments>3</experiments>
</comment>
<comment type="interaction">
    <interactant intactId="EBI-16399860">
        <id>O75781-2</id>
    </interactant>
    <interactant intactId="EBI-747754">
        <id>P28799</id>
        <label>GRN</label>
    </interactant>
    <organismsDiffer>false</organismsDiffer>
    <experiments>3</experiments>
</comment>
<comment type="interaction">
    <interactant intactId="EBI-16399860">
        <id>O75781-2</id>
    </interactant>
    <interactant intactId="EBI-50433196">
        <id>A0A6Q8PF08</id>
        <label>PMP22</label>
    </interactant>
    <organismsDiffer>false</organismsDiffer>
    <experiments>3</experiments>
</comment>
<comment type="interaction">
    <interactant intactId="EBI-16399860">
        <id>O75781-2</id>
    </interactant>
    <interactant intactId="EBI-711909">
        <id>P02766</id>
        <label>TTR</label>
    </interactant>
    <organismsDiffer>false</organismsDiffer>
    <experiments>3</experiments>
</comment>
<comment type="interaction">
    <interactant intactId="EBI-16399860">
        <id>O75781-2</id>
    </interactant>
    <interactant intactId="EBI-720609">
        <id>O76024</id>
        <label>WFS1</label>
    </interactant>
    <organismsDiffer>false</organismsDiffer>
    <experiments>3</experiments>
</comment>
<comment type="subcellular location">
    <subcellularLocation>
        <location evidence="6">Cell membrane</location>
        <topology evidence="6">Lipid-anchor</topology>
        <orientation evidence="6">Cytoplasmic side</orientation>
    </subcellularLocation>
    <subcellularLocation>
        <location evidence="6">Cell projection</location>
        <location evidence="6">Filopodium membrane</location>
        <topology evidence="6">Lipid-anchor</topology>
    </subcellularLocation>
    <subcellularLocation>
        <location evidence="1">Cell projection</location>
        <location evidence="1">Axon</location>
    </subcellularLocation>
    <subcellularLocation>
        <location evidence="1">Cell projection</location>
        <location evidence="1">Dendrite</location>
    </subcellularLocation>
    <subcellularLocation>
        <location evidence="1">Cell projection</location>
        <location evidence="1">Dendritic spine</location>
    </subcellularLocation>
    <subcellularLocation>
        <location evidence="1">Basolateral cell membrane</location>
        <topology evidence="1">Lipid-anchor</topology>
    </subcellularLocation>
    <subcellularLocation>
        <location evidence="1">Apicolateral cell membrane</location>
        <topology evidence="1">Lipid-anchor</topology>
    </subcellularLocation>
    <text>Translocation to the plasma membrane is enhanced upon stimulation of neuronal activity.</text>
</comment>
<comment type="alternative products">
    <event type="alternative splicing"/>
    <isoform>
        <id>O75781-1</id>
        <name>1</name>
        <name>Paralemmin-L</name>
        <sequence type="displayed"/>
    </isoform>
    <isoform>
        <id>O75781-2</id>
        <name>2</name>
        <name>Paralemmin-S</name>
        <sequence type="described" ref="VSP_003918"/>
    </isoform>
</comment>
<comment type="tissue specificity">
    <text>Widely expressed with highest expression in brain and testis and intermediate expression in heart and adrenal gland.</text>
</comment>
<comment type="similarity">
    <text evidence="11">Belongs to the paralemmin family.</text>
</comment>
<proteinExistence type="evidence at protein level"/>
<protein>
    <recommendedName>
        <fullName>Paralemmin-1</fullName>
    </recommendedName>
    <alternativeName>
        <fullName>Paralemmin</fullName>
    </alternativeName>
</protein>
<reference key="1">
    <citation type="journal article" date="1998" name="Genomics">
        <title>Structure of the human paralemmin gene (PALM), mapping to human chromosome 19p13.3 and mouse chromosome 10, and exclusion of coding mutations in grizzled, mocha, jittery, and hesitant mice.</title>
        <authorList>
            <person name="Burwinkel B."/>
            <person name="Miglierini G."/>
            <person name="Jenne D.E."/>
            <person name="Gilbert D.J."/>
            <person name="Copeland N.G."/>
            <person name="Jenkins N.A."/>
            <person name="Ring H.Z."/>
            <person name="Francke U."/>
            <person name="Kilimann M.W."/>
        </authorList>
    </citation>
    <scope>NUCLEOTIDE SEQUENCE [GENOMIC DNA / MRNA] (ISOFORMS 1 AND 2)</scope>
    <scope>VARIANT ALA-107</scope>
    <source>
        <tissue>Blood</tissue>
    </source>
</reference>
<reference key="2">
    <citation type="journal article" date="1998" name="J. Cell Biol.">
        <title>Paralemmin, a prenyl-palmitoyl-anchored phosphoprotein abundant in neurons and implicated in plasma membrane dynamics and cell process formation.</title>
        <authorList>
            <person name="Kutzleb C."/>
            <person name="Sanders G."/>
            <person name="Yamamoto R."/>
            <person name="Wang X."/>
            <person name="Lichte B."/>
            <person name="Petrasch-Parwez E."/>
            <person name="Kilimann M.W."/>
        </authorList>
    </citation>
    <scope>NUCLEOTIDE SEQUENCE [MRNA] (ISOFORMS 1 AND 2)</scope>
</reference>
<reference key="3">
    <citation type="journal article" date="2004" name="Nature">
        <title>The DNA sequence and biology of human chromosome 19.</title>
        <authorList>
            <person name="Grimwood J."/>
            <person name="Gordon L.A."/>
            <person name="Olsen A.S."/>
            <person name="Terry A."/>
            <person name="Schmutz J."/>
            <person name="Lamerdin J.E."/>
            <person name="Hellsten U."/>
            <person name="Goodstein D."/>
            <person name="Couronne O."/>
            <person name="Tran-Gyamfi M."/>
            <person name="Aerts A."/>
            <person name="Altherr M."/>
            <person name="Ashworth L."/>
            <person name="Bajorek E."/>
            <person name="Black S."/>
            <person name="Branscomb E."/>
            <person name="Caenepeel S."/>
            <person name="Carrano A.V."/>
            <person name="Caoile C."/>
            <person name="Chan Y.M."/>
            <person name="Christensen M."/>
            <person name="Cleland C.A."/>
            <person name="Copeland A."/>
            <person name="Dalin E."/>
            <person name="Dehal P."/>
            <person name="Denys M."/>
            <person name="Detter J.C."/>
            <person name="Escobar J."/>
            <person name="Flowers D."/>
            <person name="Fotopulos D."/>
            <person name="Garcia C."/>
            <person name="Georgescu A.M."/>
            <person name="Glavina T."/>
            <person name="Gomez M."/>
            <person name="Gonzales E."/>
            <person name="Groza M."/>
            <person name="Hammon N."/>
            <person name="Hawkins T."/>
            <person name="Haydu L."/>
            <person name="Ho I."/>
            <person name="Huang W."/>
            <person name="Israni S."/>
            <person name="Jett J."/>
            <person name="Kadner K."/>
            <person name="Kimball H."/>
            <person name="Kobayashi A."/>
            <person name="Larionov V."/>
            <person name="Leem S.-H."/>
            <person name="Lopez F."/>
            <person name="Lou Y."/>
            <person name="Lowry S."/>
            <person name="Malfatti S."/>
            <person name="Martinez D."/>
            <person name="McCready P.M."/>
            <person name="Medina C."/>
            <person name="Morgan J."/>
            <person name="Nelson K."/>
            <person name="Nolan M."/>
            <person name="Ovcharenko I."/>
            <person name="Pitluck S."/>
            <person name="Pollard M."/>
            <person name="Popkie A.P."/>
            <person name="Predki P."/>
            <person name="Quan G."/>
            <person name="Ramirez L."/>
            <person name="Rash S."/>
            <person name="Retterer J."/>
            <person name="Rodriguez A."/>
            <person name="Rogers S."/>
            <person name="Salamov A."/>
            <person name="Salazar A."/>
            <person name="She X."/>
            <person name="Smith D."/>
            <person name="Slezak T."/>
            <person name="Solovyev V."/>
            <person name="Thayer N."/>
            <person name="Tice H."/>
            <person name="Tsai M."/>
            <person name="Ustaszewska A."/>
            <person name="Vo N."/>
            <person name="Wagner M."/>
            <person name="Wheeler J."/>
            <person name="Wu K."/>
            <person name="Xie G."/>
            <person name="Yang J."/>
            <person name="Dubchak I."/>
            <person name="Furey T.S."/>
            <person name="DeJong P."/>
            <person name="Dickson M."/>
            <person name="Gordon D."/>
            <person name="Eichler E.E."/>
            <person name="Pennacchio L.A."/>
            <person name="Richardson P."/>
            <person name="Stubbs L."/>
            <person name="Rokhsar D.S."/>
            <person name="Myers R.M."/>
            <person name="Rubin E.M."/>
            <person name="Lucas S.M."/>
        </authorList>
    </citation>
    <scope>NUCLEOTIDE SEQUENCE [LARGE SCALE GENOMIC DNA]</scope>
</reference>
<reference key="4">
    <citation type="journal article" date="2004" name="Genome Res.">
        <title>The status, quality, and expansion of the NIH full-length cDNA project: the Mammalian Gene Collection (MGC).</title>
        <authorList>
            <consortium name="The MGC Project Team"/>
        </authorList>
    </citation>
    <scope>NUCLEOTIDE SEQUENCE [LARGE SCALE MRNA] (ISOFORM 1)</scope>
    <source>
        <tissue>Brain</tissue>
    </source>
</reference>
<reference key="5">
    <citation type="journal article" date="1996" name="DNA Res.">
        <title>Prediction of the coding sequences of unidentified human genes. VI. The coding sequences of 80 new genes (KIAA0201-KIAA0280) deduced by analysis of cDNA clones from cell line KG-1 and brain.</title>
        <authorList>
            <person name="Nagase T."/>
            <person name="Seki N."/>
            <person name="Ishikawa K."/>
            <person name="Ohira M."/>
            <person name="Kawarabayasi Y."/>
            <person name="Ohara O."/>
            <person name="Tanaka A."/>
            <person name="Kotani H."/>
            <person name="Miyajima N."/>
            <person name="Nomura N."/>
        </authorList>
    </citation>
    <scope>NUCLEOTIDE SEQUENCE [LARGE SCALE MRNA] OF 43-387 (ISOFORM 1)</scope>
    <source>
        <tissue>Brain</tissue>
    </source>
</reference>
<reference key="6">
    <citation type="journal article" date="2004" name="Mol. Biol. Cell">
        <title>Regulation of dendritic branching and filopodia formation in hippocampal neurons by specific acylated protein motifs.</title>
        <authorList>
            <person name="Gauthier-Campbell C."/>
            <person name="Bredt D.S."/>
            <person name="Murphy T.H."/>
            <person name="El-Husseini A."/>
        </authorList>
    </citation>
    <scope>FUNCTION</scope>
    <scope>SUBCELLULAR LOCATION</scope>
    <scope>MUTAGENESIS OF 381-CYS--CYS-383</scope>
</reference>
<reference key="7">
    <citation type="journal article" date="2006" name="Arch. Biochem. Biophys.">
        <title>Paralemmin interacts with D3 dopamine receptors: implications for membrane localization and cAMP signaling.</title>
        <authorList>
            <person name="Basile M."/>
            <person name="Lin R."/>
            <person name="Kabbani N."/>
            <person name="Karpa K."/>
            <person name="Kilimann M."/>
            <person name="Simpson I."/>
            <person name="Kester M."/>
        </authorList>
    </citation>
    <scope>INTERACTION WITH DRD3</scope>
</reference>
<reference key="8">
    <citation type="journal article" date="2008" name="Proc. Natl. Acad. Sci. U.S.A.">
        <title>A quantitative atlas of mitotic phosphorylation.</title>
        <authorList>
            <person name="Dephoure N."/>
            <person name="Zhou C."/>
            <person name="Villen J."/>
            <person name="Beausoleil S.A."/>
            <person name="Bakalarski C.E."/>
            <person name="Elledge S.J."/>
            <person name="Gygi S.P."/>
        </authorList>
    </citation>
    <scope>PHOSPHORYLATION [LARGE SCALE ANALYSIS] AT THR-141; THR-145 AND SER-162</scope>
    <scope>IDENTIFICATION BY MASS SPECTROMETRY [LARGE SCALE ANALYSIS]</scope>
    <source>
        <tissue>Cervix carcinoma</tissue>
    </source>
</reference>
<reference key="9">
    <citation type="journal article" date="2009" name="Anal. Chem.">
        <title>Lys-N and trypsin cover complementary parts of the phosphoproteome in a refined SCX-based approach.</title>
        <authorList>
            <person name="Gauci S."/>
            <person name="Helbig A.O."/>
            <person name="Slijper M."/>
            <person name="Krijgsveld J."/>
            <person name="Heck A.J."/>
            <person name="Mohammed S."/>
        </authorList>
    </citation>
    <scope>IDENTIFICATION BY MASS SPECTROMETRY [LARGE SCALE ANALYSIS]</scope>
</reference>
<reference key="10">
    <citation type="journal article" date="2010" name="Sci. Signal.">
        <title>Quantitative phosphoproteomics reveals widespread full phosphorylation site occupancy during mitosis.</title>
        <authorList>
            <person name="Olsen J.V."/>
            <person name="Vermeulen M."/>
            <person name="Santamaria A."/>
            <person name="Kumar C."/>
            <person name="Miller M.L."/>
            <person name="Jensen L.J."/>
            <person name="Gnad F."/>
            <person name="Cox J."/>
            <person name="Jensen T.S."/>
            <person name="Nigg E.A."/>
            <person name="Brunak S."/>
            <person name="Mann M."/>
        </authorList>
    </citation>
    <scope>PHOSPHORYLATION [LARGE SCALE ANALYSIS] AT SER-116; SER-124; THR-141 AND THR-145</scope>
    <scope>IDENTIFICATION BY MASS SPECTROMETRY [LARGE SCALE ANALYSIS]</scope>
    <source>
        <tissue>Cervix carcinoma</tissue>
    </source>
</reference>
<reference key="11">
    <citation type="journal article" date="2012" name="Mol. Cell. Proteomics">
        <title>Comparative large-scale characterisation of plant vs. mammal proteins reveals similar and idiosyncratic N-alpha acetylation features.</title>
        <authorList>
            <person name="Bienvenut W.V."/>
            <person name="Sumpton D."/>
            <person name="Martinez A."/>
            <person name="Lilla S."/>
            <person name="Espagne C."/>
            <person name="Meinnel T."/>
            <person name="Giglione C."/>
        </authorList>
    </citation>
    <scope>ACETYLATION [LARGE SCALE ANALYSIS] AT MET-1</scope>
    <scope>IDENTIFICATION BY MASS SPECTROMETRY [LARGE SCALE ANALYSIS]</scope>
</reference>
<reference key="12">
    <citation type="journal article" date="2012" name="Proc. Natl. Acad. Sci. U.S.A.">
        <title>N-terminal acetylome analyses and functional insights of the N-terminal acetyltransferase NatB.</title>
        <authorList>
            <person name="Van Damme P."/>
            <person name="Lasa M."/>
            <person name="Polevoda B."/>
            <person name="Gazquez C."/>
            <person name="Elosegui-Artola A."/>
            <person name="Kim D.S."/>
            <person name="De Juan-Pardo E."/>
            <person name="Demeyer K."/>
            <person name="Hole K."/>
            <person name="Larrea E."/>
            <person name="Timmerman E."/>
            <person name="Prieto J."/>
            <person name="Arnesen T."/>
            <person name="Sherman F."/>
            <person name="Gevaert K."/>
            <person name="Aldabe R."/>
        </authorList>
    </citation>
    <scope>ACETYLATION [LARGE SCALE ANALYSIS] AT MET-1</scope>
    <scope>IDENTIFICATION BY MASS SPECTROMETRY [LARGE SCALE ANALYSIS]</scope>
</reference>
<reference key="13">
    <citation type="journal article" date="2013" name="J. Proteome Res.">
        <title>Toward a comprehensive characterization of a human cancer cell phosphoproteome.</title>
        <authorList>
            <person name="Zhou H."/>
            <person name="Di Palma S."/>
            <person name="Preisinger C."/>
            <person name="Peng M."/>
            <person name="Polat A.N."/>
            <person name="Heck A.J."/>
            <person name="Mohammed S."/>
        </authorList>
    </citation>
    <scope>PHOSPHORYLATION [LARGE SCALE ANALYSIS] AT SER-116; SER-124; THR-141 AND THR-145</scope>
    <scope>IDENTIFICATION BY MASS SPECTROMETRY [LARGE SCALE ANALYSIS]</scope>
    <source>
        <tissue>Cervix carcinoma</tissue>
        <tissue>Erythroleukemia</tissue>
    </source>
</reference>
<dbReference type="EMBL" id="Y16270">
    <property type="protein sequence ID" value="CAA76151.1"/>
    <property type="molecule type" value="Genomic_DNA"/>
</dbReference>
<dbReference type="EMBL" id="Y16271">
    <property type="protein sequence ID" value="CAA76151.1"/>
    <property type="status" value="JOINED"/>
    <property type="molecule type" value="Genomic_DNA"/>
</dbReference>
<dbReference type="EMBL" id="Y16272">
    <property type="protein sequence ID" value="CAA76151.1"/>
    <property type="status" value="JOINED"/>
    <property type="molecule type" value="Genomic_DNA"/>
</dbReference>
<dbReference type="EMBL" id="Y16273">
    <property type="protein sequence ID" value="CAA76151.1"/>
    <property type="status" value="JOINED"/>
    <property type="molecule type" value="Genomic_DNA"/>
</dbReference>
<dbReference type="EMBL" id="Y16274">
    <property type="protein sequence ID" value="CAA76151.1"/>
    <property type="status" value="JOINED"/>
    <property type="molecule type" value="Genomic_DNA"/>
</dbReference>
<dbReference type="EMBL" id="Y16275">
    <property type="protein sequence ID" value="CAA76151.1"/>
    <property type="status" value="JOINED"/>
    <property type="molecule type" value="Genomic_DNA"/>
</dbReference>
<dbReference type="EMBL" id="Y16276">
    <property type="protein sequence ID" value="CAA76151.1"/>
    <property type="status" value="JOINED"/>
    <property type="molecule type" value="Genomic_DNA"/>
</dbReference>
<dbReference type="EMBL" id="Y16277">
    <property type="protein sequence ID" value="CAA76151.1"/>
    <property type="status" value="JOINED"/>
    <property type="molecule type" value="Genomic_DNA"/>
</dbReference>
<dbReference type="EMBL" id="Y16278">
    <property type="protein sequence ID" value="CAA76152.1"/>
    <property type="molecule type" value="mRNA"/>
</dbReference>
<dbReference type="EMBL" id="Y14770">
    <property type="protein sequence ID" value="CAB37400.1"/>
    <property type="molecule type" value="mRNA"/>
</dbReference>
<dbReference type="EMBL" id="Y14770">
    <property type="protein sequence ID" value="CAB37401.1"/>
    <property type="molecule type" value="mRNA"/>
</dbReference>
<dbReference type="EMBL" id="BC032449">
    <property type="protein sequence ID" value="AAH32449.1"/>
    <property type="molecule type" value="mRNA"/>
</dbReference>
<dbReference type="EMBL" id="AC004030">
    <property type="status" value="NOT_ANNOTATED_CDS"/>
    <property type="molecule type" value="Genomic_DNA"/>
</dbReference>
<dbReference type="EMBL" id="AC005763">
    <property type="protein sequence ID" value="AAC62429.1"/>
    <property type="molecule type" value="Genomic_DNA"/>
</dbReference>
<dbReference type="EMBL" id="D87460">
    <property type="protein sequence ID" value="BAA13400.1"/>
    <property type="molecule type" value="mRNA"/>
</dbReference>
<dbReference type="CCDS" id="CCDS32857.1">
    <molecule id="O75781-1"/>
</dbReference>
<dbReference type="CCDS" id="CCDS32858.1">
    <molecule id="O75781-2"/>
</dbReference>
<dbReference type="PIR" id="T00635">
    <property type="entry name" value="T00635"/>
</dbReference>
<dbReference type="RefSeq" id="NP_001035224.1">
    <molecule id="O75781-2"/>
    <property type="nucleotide sequence ID" value="NM_001040134.2"/>
</dbReference>
<dbReference type="RefSeq" id="NP_002570.2">
    <molecule id="O75781-1"/>
    <property type="nucleotide sequence ID" value="NM_002579.3"/>
</dbReference>
<dbReference type="SMR" id="O75781"/>
<dbReference type="BioGRID" id="111100">
    <property type="interactions" value="98"/>
</dbReference>
<dbReference type="FunCoup" id="O75781">
    <property type="interactions" value="566"/>
</dbReference>
<dbReference type="IntAct" id="O75781">
    <property type="interactions" value="49"/>
</dbReference>
<dbReference type="MINT" id="O75781"/>
<dbReference type="STRING" id="9606.ENSP00000341911"/>
<dbReference type="GlyGen" id="O75781">
    <property type="glycosylation" value="2 sites, 1 O-linked glycan (1 site)"/>
</dbReference>
<dbReference type="iPTMnet" id="O75781"/>
<dbReference type="PhosphoSitePlus" id="O75781"/>
<dbReference type="SwissPalm" id="O75781"/>
<dbReference type="BioMuta" id="PALM"/>
<dbReference type="jPOST" id="O75781"/>
<dbReference type="MassIVE" id="O75781"/>
<dbReference type="PaxDb" id="9606-ENSP00000341911"/>
<dbReference type="PeptideAtlas" id="O75781"/>
<dbReference type="ProteomicsDB" id="50191">
    <molecule id="O75781-1"/>
</dbReference>
<dbReference type="ProteomicsDB" id="50192">
    <molecule id="O75781-2"/>
</dbReference>
<dbReference type="Pumba" id="O75781"/>
<dbReference type="Antibodypedia" id="22365">
    <property type="antibodies" value="96 antibodies from 21 providers"/>
</dbReference>
<dbReference type="DNASU" id="5064"/>
<dbReference type="Ensembl" id="ENST00000264560.11">
    <molecule id="O75781-2"/>
    <property type="protein sequence ID" value="ENSP00000264560.7"/>
    <property type="gene ID" value="ENSG00000099864.18"/>
</dbReference>
<dbReference type="Ensembl" id="ENST00000338448.10">
    <molecule id="O75781-1"/>
    <property type="protein sequence ID" value="ENSP00000341911.4"/>
    <property type="gene ID" value="ENSG00000099864.18"/>
</dbReference>
<dbReference type="GeneID" id="5064"/>
<dbReference type="KEGG" id="hsa:5064"/>
<dbReference type="MANE-Select" id="ENST00000338448.10">
    <property type="protein sequence ID" value="ENSP00000341911.4"/>
    <property type="RefSeq nucleotide sequence ID" value="NM_002579.3"/>
    <property type="RefSeq protein sequence ID" value="NP_002570.2"/>
</dbReference>
<dbReference type="UCSC" id="uc002lpm.2">
    <molecule id="O75781-1"/>
    <property type="organism name" value="human"/>
</dbReference>
<dbReference type="AGR" id="HGNC:8594"/>
<dbReference type="CTD" id="5064"/>
<dbReference type="DisGeNET" id="5064"/>
<dbReference type="GeneCards" id="PALM"/>
<dbReference type="HGNC" id="HGNC:8594">
    <property type="gene designation" value="PALM"/>
</dbReference>
<dbReference type="HPA" id="ENSG00000099864">
    <property type="expression patterns" value="Tissue enhanced (brain)"/>
</dbReference>
<dbReference type="MalaCards" id="PALM"/>
<dbReference type="MIM" id="608134">
    <property type="type" value="gene"/>
</dbReference>
<dbReference type="neXtProt" id="NX_O75781"/>
<dbReference type="OpenTargets" id="ENSG00000099864"/>
<dbReference type="PharmGKB" id="PA32923"/>
<dbReference type="VEuPathDB" id="HostDB:ENSG00000099864"/>
<dbReference type="eggNOG" id="ENOG502QQ2W">
    <property type="taxonomic scope" value="Eukaryota"/>
</dbReference>
<dbReference type="GeneTree" id="ENSGT00940000160580"/>
<dbReference type="HOGENOM" id="CLU_038333_2_0_1"/>
<dbReference type="InParanoid" id="O75781"/>
<dbReference type="OMA" id="XMYSVEI"/>
<dbReference type="OrthoDB" id="9934905at2759"/>
<dbReference type="PAN-GO" id="O75781">
    <property type="GO annotations" value="3 GO annotations based on evolutionary models"/>
</dbReference>
<dbReference type="PhylomeDB" id="O75781"/>
<dbReference type="TreeFam" id="TF105402"/>
<dbReference type="PathwayCommons" id="O75781"/>
<dbReference type="SignaLink" id="O75781"/>
<dbReference type="BioGRID-ORCS" id="5064">
    <property type="hits" value="39 hits in 1156 CRISPR screens"/>
</dbReference>
<dbReference type="CD-CODE" id="FB4E32DD">
    <property type="entry name" value="Presynaptic clusters and postsynaptic densities"/>
</dbReference>
<dbReference type="ChiTaRS" id="PALM">
    <property type="organism name" value="human"/>
</dbReference>
<dbReference type="GeneWiki" id="PALM"/>
<dbReference type="GenomeRNAi" id="5064"/>
<dbReference type="Pharos" id="O75781">
    <property type="development level" value="Tbio"/>
</dbReference>
<dbReference type="PRO" id="PR:O75781"/>
<dbReference type="Proteomes" id="UP000005640">
    <property type="component" value="Chromosome 19"/>
</dbReference>
<dbReference type="RNAct" id="O75781">
    <property type="molecule type" value="protein"/>
</dbReference>
<dbReference type="Bgee" id="ENSG00000099864">
    <property type="expression patterns" value="Expressed in amygdala and 151 other cell types or tissues"/>
</dbReference>
<dbReference type="ExpressionAtlas" id="O75781">
    <property type="expression patterns" value="baseline and differential"/>
</dbReference>
<dbReference type="GO" id="GO:0016327">
    <property type="term" value="C:apicolateral plasma membrane"/>
    <property type="evidence" value="ECO:0007669"/>
    <property type="project" value="UniProtKB-SubCell"/>
</dbReference>
<dbReference type="GO" id="GO:0030424">
    <property type="term" value="C:axon"/>
    <property type="evidence" value="ECO:0007669"/>
    <property type="project" value="UniProtKB-SubCell"/>
</dbReference>
<dbReference type="GO" id="GO:0016323">
    <property type="term" value="C:basolateral plasma membrane"/>
    <property type="evidence" value="ECO:0007669"/>
    <property type="project" value="UniProtKB-SubCell"/>
</dbReference>
<dbReference type="GO" id="GO:0009898">
    <property type="term" value="C:cytoplasmic side of plasma membrane"/>
    <property type="evidence" value="ECO:0000304"/>
    <property type="project" value="UniProtKB"/>
</dbReference>
<dbReference type="GO" id="GO:0031410">
    <property type="term" value="C:cytoplasmic vesicle"/>
    <property type="evidence" value="ECO:0000304"/>
    <property type="project" value="ProtInc"/>
</dbReference>
<dbReference type="GO" id="GO:0043197">
    <property type="term" value="C:dendritic spine"/>
    <property type="evidence" value="ECO:0007669"/>
    <property type="project" value="UniProtKB-SubCell"/>
</dbReference>
<dbReference type="GO" id="GO:0030175">
    <property type="term" value="C:filopodium"/>
    <property type="evidence" value="ECO:0000318"/>
    <property type="project" value="GO_Central"/>
</dbReference>
<dbReference type="GO" id="GO:0031527">
    <property type="term" value="C:filopodium membrane"/>
    <property type="evidence" value="ECO:0000314"/>
    <property type="project" value="UniProtKB"/>
</dbReference>
<dbReference type="GO" id="GO:0044309">
    <property type="term" value="C:neuron spine"/>
    <property type="evidence" value="ECO:0000318"/>
    <property type="project" value="GO_Central"/>
</dbReference>
<dbReference type="GO" id="GO:0005654">
    <property type="term" value="C:nucleoplasm"/>
    <property type="evidence" value="ECO:0000314"/>
    <property type="project" value="HPA"/>
</dbReference>
<dbReference type="GO" id="GO:0005886">
    <property type="term" value="C:plasma membrane"/>
    <property type="evidence" value="ECO:0000314"/>
    <property type="project" value="HPA"/>
</dbReference>
<dbReference type="GO" id="GO:0098794">
    <property type="term" value="C:postsynapse"/>
    <property type="evidence" value="ECO:0000318"/>
    <property type="project" value="GO_Central"/>
</dbReference>
<dbReference type="GO" id="GO:0014069">
    <property type="term" value="C:postsynaptic density"/>
    <property type="evidence" value="ECO:0007669"/>
    <property type="project" value="Ensembl"/>
</dbReference>
<dbReference type="GO" id="GO:0097060">
    <property type="term" value="C:synaptic membrane"/>
    <property type="evidence" value="ECO:0000318"/>
    <property type="project" value="GO_Central"/>
</dbReference>
<dbReference type="GO" id="GO:0031750">
    <property type="term" value="F:D3 dopamine receptor binding"/>
    <property type="evidence" value="ECO:0007669"/>
    <property type="project" value="Ensembl"/>
</dbReference>
<dbReference type="GO" id="GO:0007193">
    <property type="term" value="P:adenylate cyclase-inhibiting G protein-coupled receptor signaling pathway"/>
    <property type="evidence" value="ECO:0000318"/>
    <property type="project" value="GO_Central"/>
</dbReference>
<dbReference type="GO" id="GO:0071257">
    <property type="term" value="P:cellular response to electrical stimulus"/>
    <property type="evidence" value="ECO:0007669"/>
    <property type="project" value="Ensembl"/>
</dbReference>
<dbReference type="GO" id="GO:0007010">
    <property type="term" value="P:cytoskeleton organization"/>
    <property type="evidence" value="ECO:0007669"/>
    <property type="project" value="Ensembl"/>
</dbReference>
<dbReference type="GO" id="GO:0060160">
    <property type="term" value="P:negative regulation of dopamine receptor signaling pathway"/>
    <property type="evidence" value="ECO:0000314"/>
    <property type="project" value="UniProtKB"/>
</dbReference>
<dbReference type="GO" id="GO:0051491">
    <property type="term" value="P:positive regulation of filopodium assembly"/>
    <property type="evidence" value="ECO:0000314"/>
    <property type="project" value="UniProtKB"/>
</dbReference>
<dbReference type="GO" id="GO:0072659">
    <property type="term" value="P:protein localization to plasma membrane"/>
    <property type="evidence" value="ECO:0007669"/>
    <property type="project" value="Ensembl"/>
</dbReference>
<dbReference type="GO" id="GO:0008360">
    <property type="term" value="P:regulation of cell shape"/>
    <property type="evidence" value="ECO:0007669"/>
    <property type="project" value="UniProtKB-KW"/>
</dbReference>
<dbReference type="GO" id="GO:0060074">
    <property type="term" value="P:synapse maturation"/>
    <property type="evidence" value="ECO:0000318"/>
    <property type="project" value="GO_Central"/>
</dbReference>
<dbReference type="InterPro" id="IPR004965">
    <property type="entry name" value="Paralemmin"/>
</dbReference>
<dbReference type="PANTHER" id="PTHR10498:SF6">
    <property type="entry name" value="PARALEMMIN-1"/>
    <property type="match status" value="1"/>
</dbReference>
<dbReference type="PANTHER" id="PTHR10498">
    <property type="entry name" value="PARALEMMIN-RELATED"/>
    <property type="match status" value="1"/>
</dbReference>
<dbReference type="Pfam" id="PF03285">
    <property type="entry name" value="Paralemmin"/>
    <property type="match status" value="1"/>
</dbReference>
<feature type="chain" id="PRO_0000058218" description="Paralemmin-1">
    <location>
        <begin position="1"/>
        <end position="384"/>
    </location>
</feature>
<feature type="propeptide" id="PRO_0000396689" description="Removed in mature form" evidence="4">
    <location>
        <begin position="385"/>
        <end position="387"/>
    </location>
</feature>
<feature type="region of interest" description="Disordered" evidence="5">
    <location>
        <begin position="31"/>
        <end position="160"/>
    </location>
</feature>
<feature type="region of interest" description="Disordered" evidence="5">
    <location>
        <begin position="247"/>
        <end position="296"/>
    </location>
</feature>
<feature type="region of interest" description="Disordered" evidence="5">
    <location>
        <begin position="335"/>
        <end position="378"/>
    </location>
</feature>
<feature type="coiled-coil region" evidence="4">
    <location>
        <begin position="9"/>
        <end position="101"/>
    </location>
</feature>
<feature type="compositionally biased region" description="Basic and acidic residues" evidence="5">
    <location>
        <begin position="31"/>
        <end position="41"/>
    </location>
</feature>
<feature type="compositionally biased region" description="Basic and acidic residues" evidence="5">
    <location>
        <begin position="69"/>
        <end position="102"/>
    </location>
</feature>
<feature type="compositionally biased region" description="Low complexity" evidence="5">
    <location>
        <begin position="104"/>
        <end position="117"/>
    </location>
</feature>
<feature type="compositionally biased region" description="Low complexity" evidence="5">
    <location>
        <begin position="286"/>
        <end position="296"/>
    </location>
</feature>
<feature type="modified residue" description="N-acetylmethionine" evidence="14 15">
    <location>
        <position position="1"/>
    </location>
</feature>
<feature type="modified residue" description="Phosphoserine" evidence="13 16">
    <location>
        <position position="116"/>
    </location>
</feature>
<feature type="modified residue" description="Phosphoserine" evidence="13 16">
    <location>
        <position position="124"/>
    </location>
</feature>
<feature type="modified residue" description="Phosphothreonine" evidence="12 13 16">
    <location>
        <position position="141"/>
    </location>
</feature>
<feature type="modified residue" description="Phosphothreonine" evidence="12 13 16">
    <location>
        <position position="145"/>
    </location>
</feature>
<feature type="modified residue" description="Phosphoserine" evidence="12">
    <location>
        <position position="162"/>
    </location>
</feature>
<feature type="modified residue" description="Phosphothreonine" evidence="3">
    <location>
        <position position="243"/>
    </location>
</feature>
<feature type="modified residue" description="Phosphoserine" evidence="2">
    <location>
        <position position="245"/>
    </location>
</feature>
<feature type="modified residue" description="Phosphoserine" evidence="3">
    <location>
        <position position="346"/>
    </location>
</feature>
<feature type="modified residue" description="Phosphothreonine" evidence="3">
    <location>
        <position position="367"/>
    </location>
</feature>
<feature type="modified residue" description="Phosphoserine" evidence="3">
    <location>
        <position position="369"/>
    </location>
</feature>
<feature type="modified residue" description="Cysteine methyl ester" evidence="4">
    <location>
        <position position="384"/>
    </location>
</feature>
<feature type="lipid moiety-binding region" description="S-palmitoyl cysteine" evidence="4">
    <location>
        <position position="381"/>
    </location>
</feature>
<feature type="lipid moiety-binding region" description="S-palmitoyl cysteine" evidence="4">
    <location>
        <position position="383"/>
    </location>
</feature>
<feature type="lipid moiety-binding region" description="S-farnesyl cysteine" evidence="4">
    <location>
        <position position="384"/>
    </location>
</feature>
<feature type="splice variant" id="VSP_003918" description="In isoform 2." evidence="9 10">
    <location>
        <begin position="168"/>
        <end position="211"/>
    </location>
</feature>
<feature type="sequence variant" id="VAR_053803" description="In dbSNP:rs1050457." evidence="8">
    <original>T</original>
    <variation>A</variation>
    <location>
        <position position="107"/>
    </location>
</feature>
<feature type="mutagenesis site" description="Inhibits axonal and dendritic filopodia formation and reduces axonal and dendritic branching." evidence="6">
    <original>CKC</original>
    <variation>SKS</variation>
    <location>
        <begin position="381"/>
        <end position="383"/>
    </location>
</feature>